<gene>
    <name evidence="1" type="primary">deoB</name>
    <name type="ordered locus">IL1881</name>
</gene>
<dbReference type="EC" id="5.4.2.7" evidence="1"/>
<dbReference type="EMBL" id="AE017340">
    <property type="protein sequence ID" value="AAV82713.1"/>
    <property type="molecule type" value="Genomic_DNA"/>
</dbReference>
<dbReference type="RefSeq" id="WP_011235113.1">
    <property type="nucleotide sequence ID" value="NC_006512.1"/>
</dbReference>
<dbReference type="SMR" id="Q5QXT9"/>
<dbReference type="STRING" id="283942.IL1881"/>
<dbReference type="GeneID" id="41337065"/>
<dbReference type="KEGG" id="ilo:IL1881"/>
<dbReference type="eggNOG" id="COG1015">
    <property type="taxonomic scope" value="Bacteria"/>
</dbReference>
<dbReference type="HOGENOM" id="CLU_053861_0_0_6"/>
<dbReference type="OrthoDB" id="9769930at2"/>
<dbReference type="UniPathway" id="UPA00002">
    <property type="reaction ID" value="UER00467"/>
</dbReference>
<dbReference type="Proteomes" id="UP000001171">
    <property type="component" value="Chromosome"/>
</dbReference>
<dbReference type="GO" id="GO:0005829">
    <property type="term" value="C:cytosol"/>
    <property type="evidence" value="ECO:0007669"/>
    <property type="project" value="TreeGrafter"/>
</dbReference>
<dbReference type="GO" id="GO:0000287">
    <property type="term" value="F:magnesium ion binding"/>
    <property type="evidence" value="ECO:0007669"/>
    <property type="project" value="InterPro"/>
</dbReference>
<dbReference type="GO" id="GO:0030145">
    <property type="term" value="F:manganese ion binding"/>
    <property type="evidence" value="ECO:0007669"/>
    <property type="project" value="UniProtKB-UniRule"/>
</dbReference>
<dbReference type="GO" id="GO:0008973">
    <property type="term" value="F:phosphopentomutase activity"/>
    <property type="evidence" value="ECO:0007669"/>
    <property type="project" value="UniProtKB-UniRule"/>
</dbReference>
<dbReference type="GO" id="GO:0006018">
    <property type="term" value="P:2-deoxyribose 1-phosphate catabolic process"/>
    <property type="evidence" value="ECO:0007669"/>
    <property type="project" value="UniProtKB-UniRule"/>
</dbReference>
<dbReference type="GO" id="GO:0006015">
    <property type="term" value="P:5-phosphoribose 1-diphosphate biosynthetic process"/>
    <property type="evidence" value="ECO:0007669"/>
    <property type="project" value="UniProtKB-UniPathway"/>
</dbReference>
<dbReference type="GO" id="GO:0043094">
    <property type="term" value="P:metabolic compound salvage"/>
    <property type="evidence" value="ECO:0007669"/>
    <property type="project" value="InterPro"/>
</dbReference>
<dbReference type="GO" id="GO:0009117">
    <property type="term" value="P:nucleotide metabolic process"/>
    <property type="evidence" value="ECO:0007669"/>
    <property type="project" value="InterPro"/>
</dbReference>
<dbReference type="CDD" id="cd16009">
    <property type="entry name" value="PPM"/>
    <property type="match status" value="1"/>
</dbReference>
<dbReference type="FunFam" id="3.30.70.1250:FF:000001">
    <property type="entry name" value="Phosphopentomutase"/>
    <property type="match status" value="1"/>
</dbReference>
<dbReference type="Gene3D" id="3.40.720.10">
    <property type="entry name" value="Alkaline Phosphatase, subunit A"/>
    <property type="match status" value="1"/>
</dbReference>
<dbReference type="Gene3D" id="3.30.70.1250">
    <property type="entry name" value="Phosphopentomutase"/>
    <property type="match status" value="1"/>
</dbReference>
<dbReference type="HAMAP" id="MF_00740">
    <property type="entry name" value="Phosphopentomut"/>
    <property type="match status" value="1"/>
</dbReference>
<dbReference type="InterPro" id="IPR017850">
    <property type="entry name" value="Alkaline_phosphatase_core_sf"/>
</dbReference>
<dbReference type="InterPro" id="IPR010045">
    <property type="entry name" value="DeoB"/>
</dbReference>
<dbReference type="InterPro" id="IPR006124">
    <property type="entry name" value="Metalloenzyme"/>
</dbReference>
<dbReference type="InterPro" id="IPR024052">
    <property type="entry name" value="Phosphopentomutase_DeoB_cap_sf"/>
</dbReference>
<dbReference type="NCBIfam" id="TIGR01696">
    <property type="entry name" value="deoB"/>
    <property type="match status" value="1"/>
</dbReference>
<dbReference type="NCBIfam" id="NF003766">
    <property type="entry name" value="PRK05362.1"/>
    <property type="match status" value="1"/>
</dbReference>
<dbReference type="PANTHER" id="PTHR21110">
    <property type="entry name" value="PHOSPHOPENTOMUTASE"/>
    <property type="match status" value="1"/>
</dbReference>
<dbReference type="PANTHER" id="PTHR21110:SF0">
    <property type="entry name" value="PHOSPHOPENTOMUTASE"/>
    <property type="match status" value="1"/>
</dbReference>
<dbReference type="Pfam" id="PF01676">
    <property type="entry name" value="Metalloenzyme"/>
    <property type="match status" value="1"/>
</dbReference>
<dbReference type="PIRSF" id="PIRSF001491">
    <property type="entry name" value="Ppentomutase"/>
    <property type="match status" value="1"/>
</dbReference>
<dbReference type="SUPFAM" id="SSF53649">
    <property type="entry name" value="Alkaline phosphatase-like"/>
    <property type="match status" value="1"/>
</dbReference>
<dbReference type="SUPFAM" id="SSF143856">
    <property type="entry name" value="DeoB insert domain-like"/>
    <property type="match status" value="1"/>
</dbReference>
<feature type="chain" id="PRO_0000258289" description="Phosphopentomutase">
    <location>
        <begin position="1"/>
        <end position="399"/>
    </location>
</feature>
<feature type="binding site" evidence="1">
    <location>
        <position position="10"/>
    </location>
    <ligand>
        <name>Mn(2+)</name>
        <dbReference type="ChEBI" id="CHEBI:29035"/>
        <label>1</label>
    </ligand>
</feature>
<feature type="binding site" evidence="1">
    <location>
        <position position="296"/>
    </location>
    <ligand>
        <name>Mn(2+)</name>
        <dbReference type="ChEBI" id="CHEBI:29035"/>
        <label>2</label>
    </ligand>
</feature>
<feature type="binding site" evidence="1">
    <location>
        <position position="301"/>
    </location>
    <ligand>
        <name>Mn(2+)</name>
        <dbReference type="ChEBI" id="CHEBI:29035"/>
        <label>2</label>
    </ligand>
</feature>
<feature type="binding site" evidence="1">
    <location>
        <position position="337"/>
    </location>
    <ligand>
        <name>Mn(2+)</name>
        <dbReference type="ChEBI" id="CHEBI:29035"/>
        <label>1</label>
    </ligand>
</feature>
<feature type="binding site" evidence="1">
    <location>
        <position position="338"/>
    </location>
    <ligand>
        <name>Mn(2+)</name>
        <dbReference type="ChEBI" id="CHEBI:29035"/>
        <label>1</label>
    </ligand>
</feature>
<feature type="binding site" evidence="1">
    <location>
        <position position="349"/>
    </location>
    <ligand>
        <name>Mn(2+)</name>
        <dbReference type="ChEBI" id="CHEBI:29035"/>
        <label>2</label>
    </ligand>
</feature>
<proteinExistence type="inferred from homology"/>
<keyword id="KW-0963">Cytoplasm</keyword>
<keyword id="KW-0413">Isomerase</keyword>
<keyword id="KW-0464">Manganese</keyword>
<keyword id="KW-0479">Metal-binding</keyword>
<keyword id="KW-1185">Reference proteome</keyword>
<organism>
    <name type="scientific">Idiomarina loihiensis (strain ATCC BAA-735 / DSM 15497 / L2-TR)</name>
    <dbReference type="NCBI Taxonomy" id="283942"/>
    <lineage>
        <taxon>Bacteria</taxon>
        <taxon>Pseudomonadati</taxon>
        <taxon>Pseudomonadota</taxon>
        <taxon>Gammaproteobacteria</taxon>
        <taxon>Alteromonadales</taxon>
        <taxon>Idiomarinaceae</taxon>
        <taxon>Idiomarina</taxon>
    </lineage>
</organism>
<sequence length="399" mass="43937">MSRAIVLVLDSFGIGSAPDADKFGDEGADTFGHIAEYRYQHGQPLQLPNLTRLGLAEAHKEATGTYAKGFHEVETHGAYACAAELSSGKDTPSGHWELMGVPVHFEWGYFQDKENSFPNELLAQILKACELDGYLGNCHASGTEILKQLGEQHIRSSYPIFYTSADSVFQIAAHEEHFGLERLYQVCEKVRALIEPYNIGRVIARPFVGDKADNFERTANRKDYSVLPPKPTVLDKLQNKGGKVIAIGKISDIFAGQGVSESVKASGLNGLLTATLNAMEKAPENTLIFTNLVDFDTLYGHRRDIDGYARELETFDQWLPVIESAMTPDDVLVLTADHGCDPTWQGTDHTRELIPLLLSGQNVQAGNRGKRHSFADLGQTLCRLFDLPAMEEGKAIKLS</sequence>
<comment type="function">
    <text evidence="1">Isomerase that catalyzes the conversion of deoxy-ribose 1-phosphate (dRib-1-P) and ribose 1-phosphate (Rib-1-P) to deoxy-ribose 5-phosphate (dRib-5-P) and ribose 5-phosphate (Rib-5-P), respectively.</text>
</comment>
<comment type="catalytic activity">
    <reaction evidence="1">
        <text>2-deoxy-alpha-D-ribose 1-phosphate = 2-deoxy-D-ribose 5-phosphate</text>
        <dbReference type="Rhea" id="RHEA:27658"/>
        <dbReference type="ChEBI" id="CHEBI:57259"/>
        <dbReference type="ChEBI" id="CHEBI:62877"/>
        <dbReference type="EC" id="5.4.2.7"/>
    </reaction>
</comment>
<comment type="catalytic activity">
    <reaction evidence="1">
        <text>alpha-D-ribose 1-phosphate = D-ribose 5-phosphate</text>
        <dbReference type="Rhea" id="RHEA:18793"/>
        <dbReference type="ChEBI" id="CHEBI:57720"/>
        <dbReference type="ChEBI" id="CHEBI:78346"/>
        <dbReference type="EC" id="5.4.2.7"/>
    </reaction>
</comment>
<comment type="cofactor">
    <cofactor evidence="1">
        <name>Mn(2+)</name>
        <dbReference type="ChEBI" id="CHEBI:29035"/>
    </cofactor>
    <text evidence="1">Binds 2 manganese ions.</text>
</comment>
<comment type="pathway">
    <text evidence="1">Carbohydrate degradation; 2-deoxy-D-ribose 1-phosphate degradation; D-glyceraldehyde 3-phosphate and acetaldehyde from 2-deoxy-alpha-D-ribose 1-phosphate: step 1/2.</text>
</comment>
<comment type="subcellular location">
    <subcellularLocation>
        <location evidence="1">Cytoplasm</location>
    </subcellularLocation>
</comment>
<comment type="similarity">
    <text evidence="1">Belongs to the phosphopentomutase family.</text>
</comment>
<name>DEOB_IDILO</name>
<reference key="1">
    <citation type="journal article" date="2004" name="Proc. Natl. Acad. Sci. U.S.A.">
        <title>Genome sequence of the deep-sea gamma-proteobacterium Idiomarina loihiensis reveals amino acid fermentation as a source of carbon and energy.</title>
        <authorList>
            <person name="Hou S."/>
            <person name="Saw J.H."/>
            <person name="Lee K.S."/>
            <person name="Freitas T.A."/>
            <person name="Belisle C."/>
            <person name="Kawarabayasi Y."/>
            <person name="Donachie S.P."/>
            <person name="Pikina A."/>
            <person name="Galperin M.Y."/>
            <person name="Koonin E.V."/>
            <person name="Makarova K.S."/>
            <person name="Omelchenko M.V."/>
            <person name="Sorokin A."/>
            <person name="Wolf Y.I."/>
            <person name="Li Q.X."/>
            <person name="Keum Y.S."/>
            <person name="Campbell S."/>
            <person name="Denery J."/>
            <person name="Aizawa S."/>
            <person name="Shibata S."/>
            <person name="Malahoff A."/>
            <person name="Alam M."/>
        </authorList>
    </citation>
    <scope>NUCLEOTIDE SEQUENCE [LARGE SCALE GENOMIC DNA]</scope>
    <source>
        <strain>ATCC BAA-735 / DSM 15497 / L2-TR</strain>
    </source>
</reference>
<protein>
    <recommendedName>
        <fullName evidence="1">Phosphopentomutase</fullName>
        <ecNumber evidence="1">5.4.2.7</ecNumber>
    </recommendedName>
    <alternativeName>
        <fullName evidence="1">Phosphodeoxyribomutase</fullName>
    </alternativeName>
</protein>
<accession>Q5QXT9</accession>
<evidence type="ECO:0000255" key="1">
    <source>
        <dbReference type="HAMAP-Rule" id="MF_00740"/>
    </source>
</evidence>